<accession>P45824</accession>
<sequence length="298" mass="32996">MAATLRELRGRIRSVGSIKKITKAQELIATSRIARAQVRLESARPYAVDITRMLTTLAYEAVLDHPLLVASATPKRAGVLVVSSDRGLCGAYNANVFRRSEELFSLLRAEGKTPILYVVGRKALNYYTFRNWGIAESWTGFSEQPKYENAAKIASTLVDVFMLGSSESDAGVDELHIVFTEFKSMLSQSTKARRMAPMVVEYVEESKLPRTLYSFEPDATTLFEALLPRYLTIRVYAAMLESAASELASRQRAMKSATDNADDLIKALTLEANRERQAQITQEISEIVGGANALANAR</sequence>
<gene>
    <name evidence="1" type="primary">atpG</name>
    <name type="ordered locus">ML1144</name>
</gene>
<feature type="chain" id="PRO_0000073316" description="ATP synthase gamma chain">
    <location>
        <begin position="1"/>
        <end position="298"/>
    </location>
</feature>
<keyword id="KW-0066">ATP synthesis</keyword>
<keyword id="KW-1003">Cell membrane</keyword>
<keyword id="KW-0139">CF(1)</keyword>
<keyword id="KW-0375">Hydrogen ion transport</keyword>
<keyword id="KW-0406">Ion transport</keyword>
<keyword id="KW-0472">Membrane</keyword>
<keyword id="KW-1185">Reference proteome</keyword>
<keyword id="KW-0813">Transport</keyword>
<evidence type="ECO:0000255" key="1">
    <source>
        <dbReference type="HAMAP-Rule" id="MF_00815"/>
    </source>
</evidence>
<dbReference type="EMBL" id="U15186">
    <property type="protein sequence ID" value="AAA63103.1"/>
    <property type="molecule type" value="Genomic_DNA"/>
</dbReference>
<dbReference type="EMBL" id="AL583920">
    <property type="protein sequence ID" value="CAC31525.1"/>
    <property type="molecule type" value="Genomic_DNA"/>
</dbReference>
<dbReference type="PIR" id="T09975">
    <property type="entry name" value="T09975"/>
</dbReference>
<dbReference type="RefSeq" id="NP_301838.1">
    <property type="nucleotide sequence ID" value="NC_002677.1"/>
</dbReference>
<dbReference type="RefSeq" id="WP_010908162.1">
    <property type="nucleotide sequence ID" value="NC_002677.1"/>
</dbReference>
<dbReference type="SMR" id="P45824"/>
<dbReference type="STRING" id="272631.gene:17574971"/>
<dbReference type="KEGG" id="mle:ML1144"/>
<dbReference type="PATRIC" id="fig|272631.5.peg.2066"/>
<dbReference type="Leproma" id="ML1144"/>
<dbReference type="eggNOG" id="COG0224">
    <property type="taxonomic scope" value="Bacteria"/>
</dbReference>
<dbReference type="HOGENOM" id="CLU_050669_0_0_11"/>
<dbReference type="OrthoDB" id="9812769at2"/>
<dbReference type="Proteomes" id="UP000000806">
    <property type="component" value="Chromosome"/>
</dbReference>
<dbReference type="GO" id="GO:0005886">
    <property type="term" value="C:plasma membrane"/>
    <property type="evidence" value="ECO:0007669"/>
    <property type="project" value="UniProtKB-SubCell"/>
</dbReference>
<dbReference type="GO" id="GO:0045259">
    <property type="term" value="C:proton-transporting ATP synthase complex"/>
    <property type="evidence" value="ECO:0007669"/>
    <property type="project" value="UniProtKB-KW"/>
</dbReference>
<dbReference type="GO" id="GO:0005524">
    <property type="term" value="F:ATP binding"/>
    <property type="evidence" value="ECO:0007669"/>
    <property type="project" value="UniProtKB-UniRule"/>
</dbReference>
<dbReference type="GO" id="GO:0046933">
    <property type="term" value="F:proton-transporting ATP synthase activity, rotational mechanism"/>
    <property type="evidence" value="ECO:0007669"/>
    <property type="project" value="UniProtKB-UniRule"/>
</dbReference>
<dbReference type="GO" id="GO:0042777">
    <property type="term" value="P:proton motive force-driven plasma membrane ATP synthesis"/>
    <property type="evidence" value="ECO:0007669"/>
    <property type="project" value="UniProtKB-UniRule"/>
</dbReference>
<dbReference type="CDD" id="cd12151">
    <property type="entry name" value="F1-ATPase_gamma"/>
    <property type="match status" value="1"/>
</dbReference>
<dbReference type="Gene3D" id="3.40.1380.10">
    <property type="match status" value="1"/>
</dbReference>
<dbReference type="Gene3D" id="1.10.287.80">
    <property type="entry name" value="ATP synthase, gamma subunit, helix hairpin domain"/>
    <property type="match status" value="1"/>
</dbReference>
<dbReference type="HAMAP" id="MF_00815">
    <property type="entry name" value="ATP_synth_gamma_bact"/>
    <property type="match status" value="1"/>
</dbReference>
<dbReference type="InterPro" id="IPR035968">
    <property type="entry name" value="ATP_synth_F1_ATPase_gsu"/>
</dbReference>
<dbReference type="InterPro" id="IPR000131">
    <property type="entry name" value="ATP_synth_F1_gsu"/>
</dbReference>
<dbReference type="InterPro" id="IPR023632">
    <property type="entry name" value="ATP_synth_F1_gsu_CS"/>
</dbReference>
<dbReference type="NCBIfam" id="TIGR01146">
    <property type="entry name" value="ATPsyn_F1gamma"/>
    <property type="match status" value="1"/>
</dbReference>
<dbReference type="NCBIfam" id="NF004145">
    <property type="entry name" value="PRK05621.1-2"/>
    <property type="match status" value="1"/>
</dbReference>
<dbReference type="PANTHER" id="PTHR11693">
    <property type="entry name" value="ATP SYNTHASE GAMMA CHAIN"/>
    <property type="match status" value="1"/>
</dbReference>
<dbReference type="PANTHER" id="PTHR11693:SF22">
    <property type="entry name" value="ATP SYNTHASE SUBUNIT GAMMA, MITOCHONDRIAL"/>
    <property type="match status" value="1"/>
</dbReference>
<dbReference type="Pfam" id="PF00231">
    <property type="entry name" value="ATP-synt"/>
    <property type="match status" value="1"/>
</dbReference>
<dbReference type="PRINTS" id="PR00126">
    <property type="entry name" value="ATPASEGAMMA"/>
</dbReference>
<dbReference type="SUPFAM" id="SSF52943">
    <property type="entry name" value="ATP synthase (F1-ATPase), gamma subunit"/>
    <property type="match status" value="1"/>
</dbReference>
<dbReference type="PROSITE" id="PS00153">
    <property type="entry name" value="ATPASE_GAMMA"/>
    <property type="match status" value="1"/>
</dbReference>
<comment type="function">
    <text evidence="1">Produces ATP from ADP in the presence of a proton gradient across the membrane. The gamma chain is believed to be important in regulating ATPase activity and the flow of protons through the CF(0) complex.</text>
</comment>
<comment type="subunit">
    <text evidence="1">F-type ATPases have 2 components, CF(1) - the catalytic core - and CF(0) - the membrane proton channel. CF(1) has five subunits: alpha(3), beta(3), gamma(1), delta(1), epsilon(1). CF(0) has three main subunits: a, b and c.</text>
</comment>
<comment type="subcellular location">
    <subcellularLocation>
        <location evidence="1">Cell membrane</location>
        <topology evidence="1">Peripheral membrane protein</topology>
    </subcellularLocation>
</comment>
<comment type="similarity">
    <text evidence="1">Belongs to the ATPase gamma chain family.</text>
</comment>
<protein>
    <recommendedName>
        <fullName evidence="1">ATP synthase gamma chain</fullName>
    </recommendedName>
    <alternativeName>
        <fullName evidence="1">ATP synthase F1 sector gamma subunit</fullName>
    </alternativeName>
    <alternativeName>
        <fullName evidence="1">F-ATPase gamma subunit</fullName>
    </alternativeName>
</protein>
<proteinExistence type="inferred from homology"/>
<name>ATPG_MYCLE</name>
<organism>
    <name type="scientific">Mycobacterium leprae (strain TN)</name>
    <dbReference type="NCBI Taxonomy" id="272631"/>
    <lineage>
        <taxon>Bacteria</taxon>
        <taxon>Bacillati</taxon>
        <taxon>Actinomycetota</taxon>
        <taxon>Actinomycetes</taxon>
        <taxon>Mycobacteriales</taxon>
        <taxon>Mycobacteriaceae</taxon>
        <taxon>Mycobacterium</taxon>
    </lineage>
</organism>
<reference key="1">
    <citation type="submission" date="1994-09" db="EMBL/GenBank/DDBJ databases">
        <authorList>
            <person name="Smith D.R."/>
            <person name="Robison K."/>
        </authorList>
    </citation>
    <scope>NUCLEOTIDE SEQUENCE [GENOMIC DNA]</scope>
</reference>
<reference key="2">
    <citation type="journal article" date="2001" name="Nature">
        <title>Massive gene decay in the leprosy bacillus.</title>
        <authorList>
            <person name="Cole S.T."/>
            <person name="Eiglmeier K."/>
            <person name="Parkhill J."/>
            <person name="James K.D."/>
            <person name="Thomson N.R."/>
            <person name="Wheeler P.R."/>
            <person name="Honore N."/>
            <person name="Garnier T."/>
            <person name="Churcher C.M."/>
            <person name="Harris D.E."/>
            <person name="Mungall K.L."/>
            <person name="Basham D."/>
            <person name="Brown D."/>
            <person name="Chillingworth T."/>
            <person name="Connor R."/>
            <person name="Davies R.M."/>
            <person name="Devlin K."/>
            <person name="Duthoy S."/>
            <person name="Feltwell T."/>
            <person name="Fraser A."/>
            <person name="Hamlin N."/>
            <person name="Holroyd S."/>
            <person name="Hornsby T."/>
            <person name="Jagels K."/>
            <person name="Lacroix C."/>
            <person name="Maclean J."/>
            <person name="Moule S."/>
            <person name="Murphy L.D."/>
            <person name="Oliver K."/>
            <person name="Quail M.A."/>
            <person name="Rajandream M.A."/>
            <person name="Rutherford K.M."/>
            <person name="Rutter S."/>
            <person name="Seeger K."/>
            <person name="Simon S."/>
            <person name="Simmonds M."/>
            <person name="Skelton J."/>
            <person name="Squares R."/>
            <person name="Squares S."/>
            <person name="Stevens K."/>
            <person name="Taylor K."/>
            <person name="Whitehead S."/>
            <person name="Woodward J.R."/>
            <person name="Barrell B.G."/>
        </authorList>
    </citation>
    <scope>NUCLEOTIDE SEQUENCE [LARGE SCALE GENOMIC DNA]</scope>
    <source>
        <strain>TN</strain>
    </source>
</reference>